<protein>
    <recommendedName>
        <fullName evidence="1">Pre-hexon-linking protein VIII</fullName>
    </recommendedName>
    <alternativeName>
        <fullName evidence="1">Pre-protein VIII</fullName>
        <shortName evidence="1">pVIII</shortName>
    </alternativeName>
    <component>
        <recommendedName>
            <fullName evidence="1">Hexon-linking protein-N</fullName>
        </recommendedName>
        <alternativeName>
            <fullName evidence="1">12.1 kDa protein VIII</fullName>
        </alternativeName>
        <alternativeName>
            <fullName evidence="1">Protein VIII-N</fullName>
        </alternativeName>
    </component>
    <component>
        <recommendedName>
            <fullName evidence="1">Hexon-linking protein-C</fullName>
        </recommendedName>
        <alternativeName>
            <fullName evidence="1">7.6 kDa protein VIII</fullName>
        </alternativeName>
        <alternativeName>
            <fullName evidence="1">Protein VIII-C</fullName>
        </alternativeName>
    </component>
</protein>
<reference key="1">
    <citation type="journal article" date="1994" name="Virus Res.">
        <title>Sequence analysis of putative E3, pVIII, and fiber genomic regions of a porcine adenovirus.</title>
        <authorList>
            <person name="Kleiboeker S.B."/>
        </authorList>
    </citation>
    <scope>NUCLEOTIDE SEQUENCE [GENOMIC DNA]</scope>
</reference>
<dbReference type="EMBL" id="L23218">
    <property type="protein sequence ID" value="AAA51001.1"/>
    <property type="molecule type" value="Genomic_DNA"/>
</dbReference>
<dbReference type="SMR" id="Q64846"/>
<dbReference type="GO" id="GO:0042025">
    <property type="term" value="C:host cell nucleus"/>
    <property type="evidence" value="ECO:0007669"/>
    <property type="project" value="UniProtKB-SubCell"/>
</dbReference>
<dbReference type="GO" id="GO:0019028">
    <property type="term" value="C:viral capsid"/>
    <property type="evidence" value="ECO:0007669"/>
    <property type="project" value="UniProtKB-UniRule"/>
</dbReference>
<dbReference type="GO" id="GO:0031423">
    <property type="term" value="F:hexon binding"/>
    <property type="evidence" value="ECO:0007669"/>
    <property type="project" value="InterPro"/>
</dbReference>
<dbReference type="Gene3D" id="6.10.250.1460">
    <property type="match status" value="1"/>
</dbReference>
<dbReference type="HAMAP" id="MF_04049">
    <property type="entry name" value="ADV_CAP8"/>
    <property type="match status" value="1"/>
</dbReference>
<dbReference type="InterPro" id="IPR000646">
    <property type="entry name" value="Adeno_PVIII"/>
</dbReference>
<dbReference type="Pfam" id="PF01310">
    <property type="entry name" value="Adeno_PVIII"/>
    <property type="match status" value="1"/>
</dbReference>
<organismHost>
    <name type="scientific">Sus scrofa</name>
    <name type="common">Pig</name>
    <dbReference type="NCBI Taxonomy" id="9823"/>
</organismHost>
<organism>
    <name type="scientific">Porcine adenovirus B serotype 4</name>
    <name type="common">PAdV-4</name>
    <name type="synonym">Porcine adenovirus 4</name>
    <dbReference type="NCBI Taxonomy" id="35267"/>
    <lineage>
        <taxon>Viruses</taxon>
        <taxon>Varidnaviria</taxon>
        <taxon>Bamfordvirae</taxon>
        <taxon>Preplasmiviricota</taxon>
        <taxon>Tectiliviricetes</taxon>
        <taxon>Rowavirales</taxon>
        <taxon>Adenoviridae</taxon>
        <taxon>Mastadenovirus</taxon>
        <taxon>Mastadenovirus porcusquartum</taxon>
    </lineage>
</organism>
<feature type="chain" id="PRO_0000421424" description="Pre-hexon-linking protein VIII" evidence="1">
    <location>
        <begin position="1"/>
        <end position="221"/>
    </location>
</feature>
<feature type="peptide" id="PRO_0000421425" description="Hexon-linking protein-N" evidence="1">
    <location>
        <begin position="1"/>
        <end position="112"/>
    </location>
</feature>
<feature type="propeptide" id="PRO_0000036517" evidence="1">
    <location>
        <begin position="113"/>
        <end position="150"/>
    </location>
</feature>
<feature type="peptide" id="PRO_0000036518" description="Hexon-linking protein-C" evidence="1">
    <location>
        <begin position="151"/>
        <end position="221"/>
    </location>
</feature>
<feature type="site" description="Cleavage; by viral protease" evidence="1">
    <location>
        <begin position="112"/>
        <end position="113"/>
    </location>
</feature>
<feature type="site" description="Cleavage; by viral protease" evidence="1">
    <location>
        <begin position="150"/>
        <end position="151"/>
    </location>
</feature>
<feature type="modified residue" description="Phosphothreonine; by host" evidence="1">
    <location>
        <position position="65"/>
    </location>
</feature>
<keyword id="KW-0167">Capsid protein</keyword>
<keyword id="KW-1048">Host nucleus</keyword>
<keyword id="KW-0426">Late protein</keyword>
<keyword id="KW-0597">Phosphoprotein</keyword>
<keyword id="KW-0946">Virion</keyword>
<accession>Q64846</accession>
<gene>
    <name evidence="1" type="primary">L4</name>
</gene>
<proteinExistence type="inferred from homology"/>
<evidence type="ECO:0000255" key="1">
    <source>
        <dbReference type="HAMAP-Rule" id="MF_04049"/>
    </source>
</evidence>
<evidence type="ECO:0000305" key="2"/>
<name>CAP8_ADEP4</name>
<sequence>MPLAKEIPTPYVWSYQPQMGVPAGASQDYSTKINCLSAGPRMAQTVFALRDQRNRVLTAEAHGQTPRPVVNPASWPAAALSHEPPPPTLLTLPRNEPTEHAMTDAGYQIAGGAAPWSGVKTGSFCGRGLQLAEPPTTAIYPSGLFHLGRGQRLVLDHQPARTLLLESAPSVPRYGGIGARQFLKEFTPAVYPQPYSGPPNTFPDYFCFNYDSVSNSVDGYS</sequence>
<comment type="function">
    <molecule>Hexon-linking protein-N</molecule>
    <text evidence="1">Structural component of the virion that acts as a cement protein on the capsid interior and which glue the peripentonal hexons and group-of-nine hexons together.</text>
</comment>
<comment type="function">
    <molecule>Hexon-linking protein-C</molecule>
    <text evidence="1">Structural component of the virion that acts as a cement protein on the capsid interior and which glue the peripentonal hexons and group-of-nine hexons together.</text>
</comment>
<comment type="subunit">
    <text evidence="1">Interacts with the peripentonal hexons as well as the hexons in the facets. Part of a complex composed of the core-capsid bridging protein, the endosome lysis protein VI and the hexon-linking protein VIII; these interactions bridge the virus core to the capsid.</text>
</comment>
<comment type="subcellular location">
    <molecule>Hexon-linking protein-C</molecule>
    <subcellularLocation>
        <location evidence="1">Virion</location>
    </subcellularLocation>
    <text evidence="1">Located on the inner side of the capsid shell. Present in 120 copies per virion.</text>
</comment>
<comment type="subcellular location">
    <molecule>Pre-hexon-linking protein VIII</molecule>
    <subcellularLocation>
        <location evidence="1">Host nucleus</location>
    </subcellularLocation>
</comment>
<comment type="subcellular location">
    <molecule>Hexon-linking protein-N</molecule>
    <subcellularLocation>
        <location evidence="1">Virion</location>
    </subcellularLocation>
    <text evidence="1">Located on the inner side of the capsid shell. Present in 120 copies per virion.</text>
</comment>
<comment type="induction">
    <text evidence="1">Expressed in the late phase of the viral replicative cycle.</text>
</comment>
<comment type="PTM">
    <text evidence="1">Cleaved by the viral protease during virion maturation. May cause the middle segment to be shed from the capsid.</text>
</comment>
<comment type="miscellaneous">
    <text evidence="1">All late proteins expressed from the major late promoter are produced by alternative splicing and alternative polyadenylation of the same gene giving rise to non-overlapping ORFs. A leader sequence is present in the N-terminus of all these mRNAs and is recognized by the viral shutoff protein to provide expression although conventional translation via ribosome scanning from the cap has been shut off in the host cell.</text>
</comment>
<comment type="similarity">
    <text evidence="1 2">Belongs to the adenoviridae hexon-linking protein family.</text>
</comment>